<proteinExistence type="evidence at transcript level"/>
<organism>
    <name type="scientific">Arabidopsis thaliana</name>
    <name type="common">Mouse-ear cress</name>
    <dbReference type="NCBI Taxonomy" id="3702"/>
    <lineage>
        <taxon>Eukaryota</taxon>
        <taxon>Viridiplantae</taxon>
        <taxon>Streptophyta</taxon>
        <taxon>Embryophyta</taxon>
        <taxon>Tracheophyta</taxon>
        <taxon>Spermatophyta</taxon>
        <taxon>Magnoliopsida</taxon>
        <taxon>eudicotyledons</taxon>
        <taxon>Gunneridae</taxon>
        <taxon>Pentapetalae</taxon>
        <taxon>rosids</taxon>
        <taxon>malvids</taxon>
        <taxon>Brassicales</taxon>
        <taxon>Brassicaceae</taxon>
        <taxon>Camelineae</taxon>
        <taxon>Arabidopsis</taxon>
    </lineage>
</organism>
<keyword id="KW-0325">Glycoprotein</keyword>
<keyword id="KW-0654">Proteoglycan</keyword>
<keyword id="KW-1185">Reference proteome</keyword>
<keyword id="KW-0677">Repeat</keyword>
<keyword id="KW-0964">Secreted</keyword>
<keyword id="KW-0732">Signal</keyword>
<protein>
    <recommendedName>
        <fullName>Fasciclin-like arabinogalactan protein 18</fullName>
    </recommendedName>
</protein>
<comment type="function">
    <text>May be a cell surface adhesion protein.</text>
</comment>
<comment type="subcellular location">
    <subcellularLocation>
        <location evidence="3">Secreted</location>
    </subcellularLocation>
</comment>
<comment type="similarity">
    <text evidence="3">Belongs to the fasciclin-like AGP family.</text>
</comment>
<comment type="sequence caution" evidence="3">
    <conflict type="erroneous gene model prediction">
        <sequence resource="EMBL-CDS" id="AAF02137"/>
    </conflict>
</comment>
<name>FLA18_ARATH</name>
<sequence length="462" mass="50792">MDRCIYGCSVITIFFSFFFLLNASALESGHHNITGSGQINSNSVLVALLDSRYTELAELVEKALLLQTLEDAVGRHNITIFAPRNEALERDLDPDFKRFLLQPGNLKSLQTLLLSHIIPKRVGSNQWPEENSGRVKHVTLGHDQVLHLSKLKGTNGKRLVNSAVITRPDDLTRPDGLIHGIERLLIPRSVQEDFNRRRNLRSISAVLPEGAPEIDPRTNRLKKSATAVSVPAGSPPVLPIESAMAPGPSLAPAPAPGPGGAHKHFNGDAQVKDFIHTLLHYGGYNEMADILVNLTSLATEMGRLVSEGYVLTVLAPNDEAMGKLTTDQLSEPGAPEQIMYYHIIPEYQTEESMYNSVRRFGKVKYETLRFPHKVGAKEADGSVKFGSGDRSAYLFDPDIYTDGRISVQGIDGVLFPEEKEEETVKKPTGPVKKVVQPRRGKLLEVACSMLGAIGKDSYLSRC</sequence>
<reference key="1">
    <citation type="journal article" date="2000" name="Nature">
        <title>Sequence and analysis of chromosome 3 of the plant Arabidopsis thaliana.</title>
        <authorList>
            <person name="Salanoubat M."/>
            <person name="Lemcke K."/>
            <person name="Rieger M."/>
            <person name="Ansorge W."/>
            <person name="Unseld M."/>
            <person name="Fartmann B."/>
            <person name="Valle G."/>
            <person name="Bloecker H."/>
            <person name="Perez-Alonso M."/>
            <person name="Obermaier B."/>
            <person name="Delseny M."/>
            <person name="Boutry M."/>
            <person name="Grivell L.A."/>
            <person name="Mache R."/>
            <person name="Puigdomenech P."/>
            <person name="De Simone V."/>
            <person name="Choisne N."/>
            <person name="Artiguenave F."/>
            <person name="Robert C."/>
            <person name="Brottier P."/>
            <person name="Wincker P."/>
            <person name="Cattolico L."/>
            <person name="Weissenbach J."/>
            <person name="Saurin W."/>
            <person name="Quetier F."/>
            <person name="Schaefer M."/>
            <person name="Mueller-Auer S."/>
            <person name="Gabel C."/>
            <person name="Fuchs M."/>
            <person name="Benes V."/>
            <person name="Wurmbach E."/>
            <person name="Drzonek H."/>
            <person name="Erfle H."/>
            <person name="Jordan N."/>
            <person name="Bangert S."/>
            <person name="Wiedelmann R."/>
            <person name="Kranz H."/>
            <person name="Voss H."/>
            <person name="Holland R."/>
            <person name="Brandt P."/>
            <person name="Nyakatura G."/>
            <person name="Vezzi A."/>
            <person name="D'Angelo M."/>
            <person name="Pallavicini A."/>
            <person name="Toppo S."/>
            <person name="Simionati B."/>
            <person name="Conrad A."/>
            <person name="Hornischer K."/>
            <person name="Kauer G."/>
            <person name="Loehnert T.-H."/>
            <person name="Nordsiek G."/>
            <person name="Reichelt J."/>
            <person name="Scharfe M."/>
            <person name="Schoen O."/>
            <person name="Bargues M."/>
            <person name="Terol J."/>
            <person name="Climent J."/>
            <person name="Navarro P."/>
            <person name="Collado C."/>
            <person name="Perez-Perez A."/>
            <person name="Ottenwaelder B."/>
            <person name="Duchemin D."/>
            <person name="Cooke R."/>
            <person name="Laudie M."/>
            <person name="Berger-Llauro C."/>
            <person name="Purnelle B."/>
            <person name="Masuy D."/>
            <person name="de Haan M."/>
            <person name="Maarse A.C."/>
            <person name="Alcaraz J.-P."/>
            <person name="Cottet A."/>
            <person name="Casacuberta E."/>
            <person name="Monfort A."/>
            <person name="Argiriou A."/>
            <person name="Flores M."/>
            <person name="Liguori R."/>
            <person name="Vitale D."/>
            <person name="Mannhaupt G."/>
            <person name="Haase D."/>
            <person name="Schoof H."/>
            <person name="Rudd S."/>
            <person name="Zaccaria P."/>
            <person name="Mewes H.-W."/>
            <person name="Mayer K.F.X."/>
            <person name="Kaul S."/>
            <person name="Town C.D."/>
            <person name="Koo H.L."/>
            <person name="Tallon L.J."/>
            <person name="Jenkins J."/>
            <person name="Rooney T."/>
            <person name="Rizzo M."/>
            <person name="Walts A."/>
            <person name="Utterback T."/>
            <person name="Fujii C.Y."/>
            <person name="Shea T.P."/>
            <person name="Creasy T.H."/>
            <person name="Haas B."/>
            <person name="Maiti R."/>
            <person name="Wu D."/>
            <person name="Peterson J."/>
            <person name="Van Aken S."/>
            <person name="Pai G."/>
            <person name="Militscher J."/>
            <person name="Sellers P."/>
            <person name="Gill J.E."/>
            <person name="Feldblyum T.V."/>
            <person name="Preuss D."/>
            <person name="Lin X."/>
            <person name="Nierman W.C."/>
            <person name="Salzberg S.L."/>
            <person name="White O."/>
            <person name="Venter J.C."/>
            <person name="Fraser C.M."/>
            <person name="Kaneko T."/>
            <person name="Nakamura Y."/>
            <person name="Sato S."/>
            <person name="Kato T."/>
            <person name="Asamizu E."/>
            <person name="Sasamoto S."/>
            <person name="Kimura T."/>
            <person name="Idesawa K."/>
            <person name="Kawashima K."/>
            <person name="Kishida Y."/>
            <person name="Kiyokawa C."/>
            <person name="Kohara M."/>
            <person name="Matsumoto M."/>
            <person name="Matsuno A."/>
            <person name="Muraki A."/>
            <person name="Nakayama S."/>
            <person name="Nakazaki N."/>
            <person name="Shinpo S."/>
            <person name="Takeuchi C."/>
            <person name="Wada T."/>
            <person name="Watanabe A."/>
            <person name="Yamada M."/>
            <person name="Yasuda M."/>
            <person name="Tabata S."/>
        </authorList>
    </citation>
    <scope>NUCLEOTIDE SEQUENCE [LARGE SCALE GENOMIC DNA]</scope>
    <source>
        <strain>cv. Columbia</strain>
    </source>
</reference>
<reference key="2">
    <citation type="journal article" date="2017" name="Plant J.">
        <title>Araport11: a complete reannotation of the Arabidopsis thaliana reference genome.</title>
        <authorList>
            <person name="Cheng C.Y."/>
            <person name="Krishnakumar V."/>
            <person name="Chan A.P."/>
            <person name="Thibaud-Nissen F."/>
            <person name="Schobel S."/>
            <person name="Town C.D."/>
        </authorList>
    </citation>
    <scope>GENOME REANNOTATION</scope>
    <source>
        <strain>cv. Columbia</strain>
    </source>
</reference>
<reference key="3">
    <citation type="journal article" date="2003" name="Science">
        <title>Empirical analysis of transcriptional activity in the Arabidopsis genome.</title>
        <authorList>
            <person name="Yamada K."/>
            <person name="Lim J."/>
            <person name="Dale J.M."/>
            <person name="Chen H."/>
            <person name="Shinn P."/>
            <person name="Palm C.J."/>
            <person name="Southwick A.M."/>
            <person name="Wu H.C."/>
            <person name="Kim C.J."/>
            <person name="Nguyen M."/>
            <person name="Pham P.K."/>
            <person name="Cheuk R.F."/>
            <person name="Karlin-Newmann G."/>
            <person name="Liu S.X."/>
            <person name="Lam B."/>
            <person name="Sakano H."/>
            <person name="Wu T."/>
            <person name="Yu G."/>
            <person name="Miranda M."/>
            <person name="Quach H.L."/>
            <person name="Tripp M."/>
            <person name="Chang C.H."/>
            <person name="Lee J.M."/>
            <person name="Toriumi M.J."/>
            <person name="Chan M.M."/>
            <person name="Tang C.C."/>
            <person name="Onodera C.S."/>
            <person name="Deng J.M."/>
            <person name="Akiyama K."/>
            <person name="Ansari Y."/>
            <person name="Arakawa T."/>
            <person name="Banh J."/>
            <person name="Banno F."/>
            <person name="Bowser L."/>
            <person name="Brooks S.Y."/>
            <person name="Carninci P."/>
            <person name="Chao Q."/>
            <person name="Choy N."/>
            <person name="Enju A."/>
            <person name="Goldsmith A.D."/>
            <person name="Gurjal M."/>
            <person name="Hansen N.F."/>
            <person name="Hayashizaki Y."/>
            <person name="Johnson-Hopson C."/>
            <person name="Hsuan V.W."/>
            <person name="Iida K."/>
            <person name="Karnes M."/>
            <person name="Khan S."/>
            <person name="Koesema E."/>
            <person name="Ishida J."/>
            <person name="Jiang P.X."/>
            <person name="Jones T."/>
            <person name="Kawai J."/>
            <person name="Kamiya A."/>
            <person name="Meyers C."/>
            <person name="Nakajima M."/>
            <person name="Narusaka M."/>
            <person name="Seki M."/>
            <person name="Sakurai T."/>
            <person name="Satou M."/>
            <person name="Tamse R."/>
            <person name="Vaysberg M."/>
            <person name="Wallender E.K."/>
            <person name="Wong C."/>
            <person name="Yamamura Y."/>
            <person name="Yuan S."/>
            <person name="Shinozaki K."/>
            <person name="Davis R.W."/>
            <person name="Theologis A."/>
            <person name="Ecker J.R."/>
        </authorList>
    </citation>
    <scope>NUCLEOTIDE SEQUENCE [LARGE SCALE MRNA]</scope>
    <source>
        <strain>cv. Columbia</strain>
    </source>
</reference>
<reference key="4">
    <citation type="journal article" date="2003" name="Plant Physiol.">
        <title>The fasciclin-like arabinogalactan proteins of Arabidopsis. A multigene family of putative cell adhesion molecules.</title>
        <authorList>
            <person name="Johnson K.L."/>
            <person name="Jones B.J."/>
            <person name="Bacic A."/>
            <person name="Schultz C.J."/>
        </authorList>
    </citation>
    <scope>GENE FAMILY ORGANIZATION</scope>
    <scope>NOMENCLATURE</scope>
</reference>
<accession>Q93W32</accession>
<accession>Q9SRM7</accession>
<gene>
    <name type="primary">FLA18</name>
    <name type="ordered locus">At3g11700</name>
    <name type="ORF">T19F11.10</name>
</gene>
<evidence type="ECO:0000255" key="1"/>
<evidence type="ECO:0000255" key="2">
    <source>
        <dbReference type="PROSITE-ProRule" id="PRU00082"/>
    </source>
</evidence>
<evidence type="ECO:0000305" key="3"/>
<feature type="signal peptide" evidence="1">
    <location>
        <begin position="1"/>
        <end position="25"/>
    </location>
</feature>
<feature type="chain" id="PRO_0000253878" description="Fasciclin-like arabinogalactan protein 18">
    <location>
        <begin position="26"/>
        <end position="462"/>
    </location>
</feature>
<feature type="domain" description="FAS1 1" evidence="2">
    <location>
        <begin position="40"/>
        <end position="185"/>
    </location>
</feature>
<feature type="domain" description="FAS1 2" evidence="2">
    <location>
        <begin position="271"/>
        <end position="414"/>
    </location>
</feature>
<feature type="glycosylation site" description="N-linked (GlcNAc...) asparagine" evidence="1">
    <location>
        <position position="32"/>
    </location>
</feature>
<feature type="glycosylation site" description="N-linked (GlcNAc...) asparagine" evidence="1">
    <location>
        <position position="77"/>
    </location>
</feature>
<feature type="glycosylation site" description="N-linked (GlcNAc...) asparagine" evidence="1">
    <location>
        <position position="293"/>
    </location>
</feature>
<dbReference type="EMBL" id="AC009918">
    <property type="protein sequence ID" value="AAF02137.1"/>
    <property type="status" value="ALT_SEQ"/>
    <property type="molecule type" value="Genomic_DNA"/>
</dbReference>
<dbReference type="EMBL" id="CP002686">
    <property type="protein sequence ID" value="AEE75085.1"/>
    <property type="molecule type" value="Genomic_DNA"/>
</dbReference>
<dbReference type="EMBL" id="AY056197">
    <property type="protein sequence ID" value="AAL07046.1"/>
    <property type="molecule type" value="mRNA"/>
</dbReference>
<dbReference type="EMBL" id="AY058879">
    <property type="protein sequence ID" value="AAL24265.1"/>
    <property type="molecule type" value="mRNA"/>
</dbReference>
<dbReference type="EMBL" id="AY133794">
    <property type="protein sequence ID" value="AAM91728.1"/>
    <property type="molecule type" value="mRNA"/>
</dbReference>
<dbReference type="RefSeq" id="NP_566398.1">
    <property type="nucleotide sequence ID" value="NM_112002.3"/>
</dbReference>
<dbReference type="FunCoup" id="Q93W32">
    <property type="interactions" value="799"/>
</dbReference>
<dbReference type="STRING" id="3702.Q93W32"/>
<dbReference type="GlyCosmos" id="Q93W32">
    <property type="glycosylation" value="3 sites, No reported glycans"/>
</dbReference>
<dbReference type="GlyGen" id="Q93W32">
    <property type="glycosylation" value="3 sites"/>
</dbReference>
<dbReference type="PaxDb" id="3702-AT3G11700.1"/>
<dbReference type="ProteomicsDB" id="230430"/>
<dbReference type="EnsemblPlants" id="AT3G11700.1">
    <property type="protein sequence ID" value="AT3G11700.1"/>
    <property type="gene ID" value="AT3G11700"/>
</dbReference>
<dbReference type="GeneID" id="820342"/>
<dbReference type="Gramene" id="AT3G11700.1">
    <property type="protein sequence ID" value="AT3G11700.1"/>
    <property type="gene ID" value="AT3G11700"/>
</dbReference>
<dbReference type="KEGG" id="ath:AT3G11700"/>
<dbReference type="Araport" id="AT3G11700"/>
<dbReference type="TAIR" id="AT3G11700">
    <property type="gene designation" value="FLA18"/>
</dbReference>
<dbReference type="eggNOG" id="KOG1437">
    <property type="taxonomic scope" value="Eukaryota"/>
</dbReference>
<dbReference type="HOGENOM" id="CLU_047484_0_0_1"/>
<dbReference type="InParanoid" id="Q93W32"/>
<dbReference type="OMA" id="KLMEVGC"/>
<dbReference type="OrthoDB" id="286301at2759"/>
<dbReference type="PhylomeDB" id="Q93W32"/>
<dbReference type="PRO" id="PR:Q93W32"/>
<dbReference type="Proteomes" id="UP000006548">
    <property type="component" value="Chromosome 3"/>
</dbReference>
<dbReference type="ExpressionAtlas" id="Q93W32">
    <property type="expression patterns" value="baseline and differential"/>
</dbReference>
<dbReference type="GO" id="GO:0005576">
    <property type="term" value="C:extracellular region"/>
    <property type="evidence" value="ECO:0007669"/>
    <property type="project" value="UniProtKB-SubCell"/>
</dbReference>
<dbReference type="GO" id="GO:0000325">
    <property type="term" value="C:plant-type vacuole"/>
    <property type="evidence" value="ECO:0007005"/>
    <property type="project" value="TAIR"/>
</dbReference>
<dbReference type="GO" id="GO:0099503">
    <property type="term" value="C:secretory vesicle"/>
    <property type="evidence" value="ECO:0007005"/>
    <property type="project" value="TAIR"/>
</dbReference>
<dbReference type="FunFam" id="2.30.180.10:FF:000024">
    <property type="entry name" value="fasciclin-like arabinogalactan protein 15"/>
    <property type="match status" value="1"/>
</dbReference>
<dbReference type="FunFam" id="2.30.180.10:FF:000011">
    <property type="entry name" value="Fasciclin-like arabinogalactan protein 16"/>
    <property type="match status" value="1"/>
</dbReference>
<dbReference type="Gene3D" id="2.30.180.10">
    <property type="entry name" value="FAS1 domain"/>
    <property type="match status" value="2"/>
</dbReference>
<dbReference type="InterPro" id="IPR036378">
    <property type="entry name" value="FAS1_dom_sf"/>
</dbReference>
<dbReference type="InterPro" id="IPR000782">
    <property type="entry name" value="FAS1_domain"/>
</dbReference>
<dbReference type="InterPro" id="IPR044654">
    <property type="entry name" value="FLA15/16/17/18"/>
</dbReference>
<dbReference type="PANTHER" id="PTHR32499">
    <property type="entry name" value="FASCICLIN-LIKE ARABINOGALACTAN PROTEIN 16"/>
    <property type="match status" value="1"/>
</dbReference>
<dbReference type="PANTHER" id="PTHR32499:SF10">
    <property type="entry name" value="FASCICLIN-LIKE ARABINOGALACTAN PROTEIN 18"/>
    <property type="match status" value="1"/>
</dbReference>
<dbReference type="Pfam" id="PF02469">
    <property type="entry name" value="Fasciclin"/>
    <property type="match status" value="2"/>
</dbReference>
<dbReference type="SMART" id="SM00554">
    <property type="entry name" value="FAS1"/>
    <property type="match status" value="2"/>
</dbReference>
<dbReference type="SUPFAM" id="SSF82153">
    <property type="entry name" value="FAS1 domain"/>
    <property type="match status" value="2"/>
</dbReference>
<dbReference type="PROSITE" id="PS50213">
    <property type="entry name" value="FAS1"/>
    <property type="match status" value="2"/>
</dbReference>